<keyword id="KW-0472">Membrane</keyword>
<keyword id="KW-0812">Transmembrane</keyword>
<keyword id="KW-1133">Transmembrane helix</keyword>
<reference key="1">
    <citation type="journal article" date="1997" name="Nature">
        <title>The nucleotide sequence of Saccharomyces cerevisiae chromosome XII.</title>
        <authorList>
            <person name="Johnston M."/>
            <person name="Hillier L.W."/>
            <person name="Riles L."/>
            <person name="Albermann K."/>
            <person name="Andre B."/>
            <person name="Ansorge W."/>
            <person name="Benes V."/>
            <person name="Brueckner M."/>
            <person name="Delius H."/>
            <person name="Dubois E."/>
            <person name="Duesterhoeft A."/>
            <person name="Entian K.-D."/>
            <person name="Floeth M."/>
            <person name="Goffeau A."/>
            <person name="Hebling U."/>
            <person name="Heumann K."/>
            <person name="Heuss-Neitzel D."/>
            <person name="Hilbert H."/>
            <person name="Hilger F."/>
            <person name="Kleine K."/>
            <person name="Koetter P."/>
            <person name="Louis E.J."/>
            <person name="Messenguy F."/>
            <person name="Mewes H.-W."/>
            <person name="Miosga T."/>
            <person name="Moestl D."/>
            <person name="Mueller-Auer S."/>
            <person name="Nentwich U."/>
            <person name="Obermaier B."/>
            <person name="Piravandi E."/>
            <person name="Pohl T.M."/>
            <person name="Portetelle D."/>
            <person name="Purnelle B."/>
            <person name="Rechmann S."/>
            <person name="Rieger M."/>
            <person name="Rinke M."/>
            <person name="Rose M."/>
            <person name="Scharfe M."/>
            <person name="Scherens B."/>
            <person name="Scholler P."/>
            <person name="Schwager C."/>
            <person name="Schwarz S."/>
            <person name="Underwood A.P."/>
            <person name="Urrestarazu L.A."/>
            <person name="Vandenbol M."/>
            <person name="Verhasselt P."/>
            <person name="Vierendeels F."/>
            <person name="Voet M."/>
            <person name="Volckaert G."/>
            <person name="Voss H."/>
            <person name="Wambutt R."/>
            <person name="Wedler E."/>
            <person name="Wedler H."/>
            <person name="Zimmermann F.K."/>
            <person name="Zollner A."/>
            <person name="Hani J."/>
            <person name="Hoheisel J.D."/>
        </authorList>
    </citation>
    <scope>NUCLEOTIDE SEQUENCE [LARGE SCALE GENOMIC DNA]</scope>
    <source>
        <strain>ATCC 204508 / S288c</strain>
    </source>
</reference>
<reference key="2">
    <citation type="journal article" date="2014" name="G3 (Bethesda)">
        <title>The reference genome sequence of Saccharomyces cerevisiae: Then and now.</title>
        <authorList>
            <person name="Engel S.R."/>
            <person name="Dietrich F.S."/>
            <person name="Fisk D.G."/>
            <person name="Binkley G."/>
            <person name="Balakrishnan R."/>
            <person name="Costanzo M.C."/>
            <person name="Dwight S.S."/>
            <person name="Hitz B.C."/>
            <person name="Karra K."/>
            <person name="Nash R.S."/>
            <person name="Weng S."/>
            <person name="Wong E.D."/>
            <person name="Lloyd P."/>
            <person name="Skrzypek M.S."/>
            <person name="Miyasato S.R."/>
            <person name="Simison M."/>
            <person name="Cherry J.M."/>
        </authorList>
    </citation>
    <scope>GENOME REANNOTATION</scope>
    <source>
        <strain>ATCC 204508 / S288c</strain>
    </source>
</reference>
<reference key="3">
    <citation type="journal article" date="2007" name="Genome Res.">
        <title>Approaching a complete repository of sequence-verified protein-encoding clones for Saccharomyces cerevisiae.</title>
        <authorList>
            <person name="Hu Y."/>
            <person name="Rolfs A."/>
            <person name="Bhullar B."/>
            <person name="Murthy T.V.S."/>
            <person name="Zhu C."/>
            <person name="Berger M.F."/>
            <person name="Camargo A.A."/>
            <person name="Kelley F."/>
            <person name="McCarron S."/>
            <person name="Jepson D."/>
            <person name="Richardson A."/>
            <person name="Raphael J."/>
            <person name="Moreira D."/>
            <person name="Taycher E."/>
            <person name="Zuo D."/>
            <person name="Mohr S."/>
            <person name="Kane M.F."/>
            <person name="Williamson J."/>
            <person name="Simpson A.J.G."/>
            <person name="Bulyk M.L."/>
            <person name="Harlow E."/>
            <person name="Marsischky G."/>
            <person name="Kolodner R.D."/>
            <person name="LaBaer J."/>
        </authorList>
    </citation>
    <scope>NUCLEOTIDE SEQUENCE [GENOMIC DNA]</scope>
    <source>
        <strain>ATCC 204508 / S288c</strain>
    </source>
</reference>
<accession>O13545</accession>
<organism>
    <name type="scientific">Saccharomyces cerevisiae (strain ATCC 204508 / S288c)</name>
    <name type="common">Baker's yeast</name>
    <dbReference type="NCBI Taxonomy" id="559292"/>
    <lineage>
        <taxon>Eukaryota</taxon>
        <taxon>Fungi</taxon>
        <taxon>Dikarya</taxon>
        <taxon>Ascomycota</taxon>
        <taxon>Saccharomycotina</taxon>
        <taxon>Saccharomycetes</taxon>
        <taxon>Saccharomycetales</taxon>
        <taxon>Saccharomycetaceae</taxon>
        <taxon>Saccharomyces</taxon>
    </lineage>
</organism>
<evidence type="ECO:0000255" key="1"/>
<evidence type="ECO:0000305" key="2"/>
<evidence type="ECO:0000305" key="3">
    <source>
    </source>
</evidence>
<sequence length="129" mass="14166">MFILGSVGCVEADEASPLYCLSAALIRLSNDEMGGNVMWFIALLFALLIARCTCHTKNTHPDFSKPTFCHQHAALTNSLSSLYRCFVPDGTAMLPTATKKTPQRRKNGAIIHRVVIYHGRESANGISKQ</sequence>
<feature type="chain" id="PRO_0000299644" description="Putative uncharacterized protein YLR374C">
    <location>
        <begin position="1"/>
        <end position="129"/>
    </location>
</feature>
<feature type="transmembrane region" description="Helical" evidence="1">
    <location>
        <begin position="33"/>
        <end position="50"/>
    </location>
</feature>
<protein>
    <recommendedName>
        <fullName>Putative uncharacterized protein YLR374C</fullName>
    </recommendedName>
</protein>
<name>YL374_YEAST</name>
<gene>
    <name type="ordered locus">YLR374C</name>
</gene>
<dbReference type="EMBL" id="U19103">
    <property type="protein sequence ID" value="AAB67580.1"/>
    <property type="molecule type" value="Genomic_DNA"/>
</dbReference>
<dbReference type="EMBL" id="AY693302">
    <property type="protein sequence ID" value="AAT93321.1"/>
    <property type="molecule type" value="Genomic_DNA"/>
</dbReference>
<dbReference type="PIR" id="S69316">
    <property type="entry name" value="S69316"/>
</dbReference>
<dbReference type="DIP" id="DIP-4648N"/>
<dbReference type="PaxDb" id="4932-YLR374C"/>
<dbReference type="EnsemblFungi" id="YLR374C_mRNA">
    <property type="protein sequence ID" value="YLR374C"/>
    <property type="gene ID" value="YLR374C"/>
</dbReference>
<dbReference type="AGR" id="SGD:S000004366"/>
<dbReference type="SGD" id="S000004366">
    <property type="gene designation" value="YLR374C"/>
</dbReference>
<dbReference type="HOGENOM" id="CLU_1950495_0_0_1"/>
<dbReference type="GO" id="GO:0016020">
    <property type="term" value="C:membrane"/>
    <property type="evidence" value="ECO:0007669"/>
    <property type="project" value="UniProtKB-SubCell"/>
</dbReference>
<proteinExistence type="uncertain"/>
<comment type="subcellular location">
    <subcellularLocation>
        <location evidence="2">Membrane</location>
        <topology evidence="2">Single-pass membrane protein</topology>
    </subcellularLocation>
</comment>
<comment type="miscellaneous">
    <text evidence="2">Partially overlaps STP3.</text>
</comment>
<comment type="caution">
    <text evidence="3">Product of a dubious gene prediction unlikely to encode a functional protein. Because of that it is not part of the S.cerevisiae S288c complete/reference proteome set.</text>
</comment>